<organism>
    <name type="scientific">Lachnospira eligens (strain ATCC 27750 / DSM 3376 / VPI C15-48 / C15-B4)</name>
    <name type="common">Eubacterium eligens</name>
    <dbReference type="NCBI Taxonomy" id="515620"/>
    <lineage>
        <taxon>Bacteria</taxon>
        <taxon>Bacillati</taxon>
        <taxon>Bacillota</taxon>
        <taxon>Clostridia</taxon>
        <taxon>Lachnospirales</taxon>
        <taxon>Lachnospiraceae</taxon>
        <taxon>Lachnospira</taxon>
    </lineage>
</organism>
<sequence length="604" mass="67622">MAGINQKNIRNFCIIAHIDHGKSTLADRIIEKTGLLTSREMQEQILDNMDLERERGITIKAQTVRTVYKASDGQEYIFNLIDTPGHVDFNYEVSRALAACDGAILVVDAAQGIEAQTLANVYLALDHDLDVFPVINKIDLPSAEPERVIEEIEDIIGIEAQDAPLISAKNGINIEEVLEQIVTKIPAPSGDASAPLSALIFDSLYDAYKGVIIFVRIKEGTVKKGTKIRMMATGAVEEVVEVGYFGAGRFIPCDELTAGMVGYITASIKNVRDTRVGDTVTDNDRPCEQPLPGYKKVNPMVYCGLYPADGAKYQDLRDALEKLQLNDAALQFEPETSIALGFGFRCGFLGLLHLEIIQERLEREYNLDLVTTAPGVIYKVHKTNGDVIDLTNPSNMPDPSEIDYMEEPMVSAEIMVTTEFVGPIMKLCQERRGIYNGMEYIEQTRALLKYDLPLNEIIYDFFDALKSRSRGYASFDYEMKGYERSKLVKLDILINKEEVDALSFIVFAGNAEERGRKMCEKLKEEIPRQQFEIPIQAAIGSKVIARETVKALRKDVLAKCYGGDISRKKKLLEKQKEGKKRMRQIGNVEIPQKAFMSVLKLDDE</sequence>
<dbReference type="EC" id="3.6.5.n1" evidence="1"/>
<dbReference type="EMBL" id="CP001104">
    <property type="protein sequence ID" value="ACR71745.1"/>
    <property type="molecule type" value="Genomic_DNA"/>
</dbReference>
<dbReference type="RefSeq" id="WP_012738981.1">
    <property type="nucleotide sequence ID" value="NC_012778.1"/>
</dbReference>
<dbReference type="SMR" id="C4Z541"/>
<dbReference type="STRING" id="515620.EUBELI_00737"/>
<dbReference type="GeneID" id="41355481"/>
<dbReference type="KEGG" id="eel:EUBELI_00737"/>
<dbReference type="eggNOG" id="COG0481">
    <property type="taxonomic scope" value="Bacteria"/>
</dbReference>
<dbReference type="HOGENOM" id="CLU_009995_3_3_9"/>
<dbReference type="Proteomes" id="UP000001476">
    <property type="component" value="Chromosome"/>
</dbReference>
<dbReference type="GO" id="GO:0005886">
    <property type="term" value="C:plasma membrane"/>
    <property type="evidence" value="ECO:0007669"/>
    <property type="project" value="UniProtKB-SubCell"/>
</dbReference>
<dbReference type="GO" id="GO:0005525">
    <property type="term" value="F:GTP binding"/>
    <property type="evidence" value="ECO:0007669"/>
    <property type="project" value="UniProtKB-UniRule"/>
</dbReference>
<dbReference type="GO" id="GO:0003924">
    <property type="term" value="F:GTPase activity"/>
    <property type="evidence" value="ECO:0007669"/>
    <property type="project" value="UniProtKB-UniRule"/>
</dbReference>
<dbReference type="GO" id="GO:0043022">
    <property type="term" value="F:ribosome binding"/>
    <property type="evidence" value="ECO:0007669"/>
    <property type="project" value="UniProtKB-UniRule"/>
</dbReference>
<dbReference type="GO" id="GO:0003746">
    <property type="term" value="F:translation elongation factor activity"/>
    <property type="evidence" value="ECO:0007669"/>
    <property type="project" value="UniProtKB-UniRule"/>
</dbReference>
<dbReference type="GO" id="GO:0045727">
    <property type="term" value="P:positive regulation of translation"/>
    <property type="evidence" value="ECO:0007669"/>
    <property type="project" value="UniProtKB-UniRule"/>
</dbReference>
<dbReference type="CDD" id="cd03699">
    <property type="entry name" value="EF4_II"/>
    <property type="match status" value="1"/>
</dbReference>
<dbReference type="CDD" id="cd16260">
    <property type="entry name" value="EF4_III"/>
    <property type="match status" value="1"/>
</dbReference>
<dbReference type="CDD" id="cd01890">
    <property type="entry name" value="LepA"/>
    <property type="match status" value="1"/>
</dbReference>
<dbReference type="CDD" id="cd03709">
    <property type="entry name" value="lepA_C"/>
    <property type="match status" value="1"/>
</dbReference>
<dbReference type="FunFam" id="3.40.50.300:FF:000078">
    <property type="entry name" value="Elongation factor 4"/>
    <property type="match status" value="1"/>
</dbReference>
<dbReference type="FunFam" id="2.40.30.10:FF:000015">
    <property type="entry name" value="Translation factor GUF1, mitochondrial"/>
    <property type="match status" value="1"/>
</dbReference>
<dbReference type="FunFam" id="3.30.70.240:FF:000007">
    <property type="entry name" value="Translation factor GUF1, mitochondrial"/>
    <property type="match status" value="1"/>
</dbReference>
<dbReference type="FunFam" id="3.30.70.2570:FF:000001">
    <property type="entry name" value="Translation factor GUF1, mitochondrial"/>
    <property type="match status" value="1"/>
</dbReference>
<dbReference type="FunFam" id="3.30.70.870:FF:000004">
    <property type="entry name" value="Translation factor GUF1, mitochondrial"/>
    <property type="match status" value="1"/>
</dbReference>
<dbReference type="Gene3D" id="3.30.70.240">
    <property type="match status" value="1"/>
</dbReference>
<dbReference type="Gene3D" id="3.30.70.2570">
    <property type="entry name" value="Elongation factor 4, C-terminal domain"/>
    <property type="match status" value="1"/>
</dbReference>
<dbReference type="Gene3D" id="3.30.70.870">
    <property type="entry name" value="Elongation Factor G (Translational Gtpase), domain 3"/>
    <property type="match status" value="1"/>
</dbReference>
<dbReference type="Gene3D" id="3.40.50.300">
    <property type="entry name" value="P-loop containing nucleotide triphosphate hydrolases"/>
    <property type="match status" value="1"/>
</dbReference>
<dbReference type="Gene3D" id="2.40.30.10">
    <property type="entry name" value="Translation factors"/>
    <property type="match status" value="1"/>
</dbReference>
<dbReference type="HAMAP" id="MF_00071">
    <property type="entry name" value="LepA"/>
    <property type="match status" value="1"/>
</dbReference>
<dbReference type="InterPro" id="IPR006297">
    <property type="entry name" value="EF-4"/>
</dbReference>
<dbReference type="InterPro" id="IPR035647">
    <property type="entry name" value="EFG_III/V"/>
</dbReference>
<dbReference type="InterPro" id="IPR000640">
    <property type="entry name" value="EFG_V-like"/>
</dbReference>
<dbReference type="InterPro" id="IPR004161">
    <property type="entry name" value="EFTu-like_2"/>
</dbReference>
<dbReference type="InterPro" id="IPR031157">
    <property type="entry name" value="G_TR_CS"/>
</dbReference>
<dbReference type="InterPro" id="IPR038363">
    <property type="entry name" value="LepA_C_sf"/>
</dbReference>
<dbReference type="InterPro" id="IPR013842">
    <property type="entry name" value="LepA_CTD"/>
</dbReference>
<dbReference type="InterPro" id="IPR035654">
    <property type="entry name" value="LepA_IV"/>
</dbReference>
<dbReference type="InterPro" id="IPR027417">
    <property type="entry name" value="P-loop_NTPase"/>
</dbReference>
<dbReference type="InterPro" id="IPR005225">
    <property type="entry name" value="Small_GTP-bd"/>
</dbReference>
<dbReference type="InterPro" id="IPR000795">
    <property type="entry name" value="T_Tr_GTP-bd_dom"/>
</dbReference>
<dbReference type="InterPro" id="IPR009000">
    <property type="entry name" value="Transl_B-barrel_sf"/>
</dbReference>
<dbReference type="NCBIfam" id="TIGR01393">
    <property type="entry name" value="lepA"/>
    <property type="match status" value="1"/>
</dbReference>
<dbReference type="NCBIfam" id="TIGR00231">
    <property type="entry name" value="small_GTP"/>
    <property type="match status" value="1"/>
</dbReference>
<dbReference type="PANTHER" id="PTHR43512:SF4">
    <property type="entry name" value="TRANSLATION FACTOR GUF1 HOMOLOG, CHLOROPLASTIC"/>
    <property type="match status" value="1"/>
</dbReference>
<dbReference type="PANTHER" id="PTHR43512">
    <property type="entry name" value="TRANSLATION FACTOR GUF1-RELATED"/>
    <property type="match status" value="1"/>
</dbReference>
<dbReference type="Pfam" id="PF00679">
    <property type="entry name" value="EFG_C"/>
    <property type="match status" value="1"/>
</dbReference>
<dbReference type="Pfam" id="PF00009">
    <property type="entry name" value="GTP_EFTU"/>
    <property type="match status" value="1"/>
</dbReference>
<dbReference type="Pfam" id="PF03144">
    <property type="entry name" value="GTP_EFTU_D2"/>
    <property type="match status" value="1"/>
</dbReference>
<dbReference type="Pfam" id="PF06421">
    <property type="entry name" value="LepA_C"/>
    <property type="match status" value="1"/>
</dbReference>
<dbReference type="PRINTS" id="PR00315">
    <property type="entry name" value="ELONGATNFCT"/>
</dbReference>
<dbReference type="SMART" id="SM00838">
    <property type="entry name" value="EFG_C"/>
    <property type="match status" value="1"/>
</dbReference>
<dbReference type="SUPFAM" id="SSF54980">
    <property type="entry name" value="EF-G C-terminal domain-like"/>
    <property type="match status" value="2"/>
</dbReference>
<dbReference type="SUPFAM" id="SSF52540">
    <property type="entry name" value="P-loop containing nucleoside triphosphate hydrolases"/>
    <property type="match status" value="1"/>
</dbReference>
<dbReference type="SUPFAM" id="SSF50447">
    <property type="entry name" value="Translation proteins"/>
    <property type="match status" value="1"/>
</dbReference>
<dbReference type="PROSITE" id="PS00301">
    <property type="entry name" value="G_TR_1"/>
    <property type="match status" value="1"/>
</dbReference>
<dbReference type="PROSITE" id="PS51722">
    <property type="entry name" value="G_TR_2"/>
    <property type="match status" value="1"/>
</dbReference>
<name>LEPA_LACE2</name>
<evidence type="ECO:0000255" key="1">
    <source>
        <dbReference type="HAMAP-Rule" id="MF_00071"/>
    </source>
</evidence>
<reference key="1">
    <citation type="journal article" date="2009" name="Proc. Natl. Acad. Sci. U.S.A.">
        <title>Characterizing a model human gut microbiota composed of members of its two dominant bacterial phyla.</title>
        <authorList>
            <person name="Mahowald M.A."/>
            <person name="Rey F.E."/>
            <person name="Seedorf H."/>
            <person name="Turnbaugh P.J."/>
            <person name="Fulton R.S."/>
            <person name="Wollam A."/>
            <person name="Shah N."/>
            <person name="Wang C."/>
            <person name="Magrini V."/>
            <person name="Wilson R.K."/>
            <person name="Cantarel B.L."/>
            <person name="Coutinho P.M."/>
            <person name="Henrissat B."/>
            <person name="Crock L.W."/>
            <person name="Russell A."/>
            <person name="Verberkmoes N.C."/>
            <person name="Hettich R.L."/>
            <person name="Gordon J.I."/>
        </authorList>
    </citation>
    <scope>NUCLEOTIDE SEQUENCE [LARGE SCALE GENOMIC DNA]</scope>
    <source>
        <strain>ATCC 27750 / DSM 3376 / VPI C15-48 / C15-B4</strain>
    </source>
</reference>
<protein>
    <recommendedName>
        <fullName evidence="1">Elongation factor 4</fullName>
        <shortName evidence="1">EF-4</shortName>
        <ecNumber evidence="1">3.6.5.n1</ecNumber>
    </recommendedName>
    <alternativeName>
        <fullName evidence="1">Ribosomal back-translocase LepA</fullName>
    </alternativeName>
</protein>
<gene>
    <name evidence="1" type="primary">lepA</name>
    <name type="ordered locus">EUBELI_00737</name>
</gene>
<feature type="chain" id="PRO_1000202449" description="Elongation factor 4">
    <location>
        <begin position="1"/>
        <end position="604"/>
    </location>
</feature>
<feature type="domain" description="tr-type G">
    <location>
        <begin position="7"/>
        <end position="189"/>
    </location>
</feature>
<feature type="binding site" evidence="1">
    <location>
        <begin position="19"/>
        <end position="24"/>
    </location>
    <ligand>
        <name>GTP</name>
        <dbReference type="ChEBI" id="CHEBI:37565"/>
    </ligand>
</feature>
<feature type="binding site" evidence="1">
    <location>
        <begin position="136"/>
        <end position="139"/>
    </location>
    <ligand>
        <name>GTP</name>
        <dbReference type="ChEBI" id="CHEBI:37565"/>
    </ligand>
</feature>
<comment type="function">
    <text evidence="1">Required for accurate and efficient protein synthesis under certain stress conditions. May act as a fidelity factor of the translation reaction, by catalyzing a one-codon backward translocation of tRNAs on improperly translocated ribosomes. Back-translocation proceeds from a post-translocation (POST) complex to a pre-translocation (PRE) complex, thus giving elongation factor G a second chance to translocate the tRNAs correctly. Binds to ribosomes in a GTP-dependent manner.</text>
</comment>
<comment type="catalytic activity">
    <reaction evidence="1">
        <text>GTP + H2O = GDP + phosphate + H(+)</text>
        <dbReference type="Rhea" id="RHEA:19669"/>
        <dbReference type="ChEBI" id="CHEBI:15377"/>
        <dbReference type="ChEBI" id="CHEBI:15378"/>
        <dbReference type="ChEBI" id="CHEBI:37565"/>
        <dbReference type="ChEBI" id="CHEBI:43474"/>
        <dbReference type="ChEBI" id="CHEBI:58189"/>
        <dbReference type="EC" id="3.6.5.n1"/>
    </reaction>
</comment>
<comment type="subcellular location">
    <subcellularLocation>
        <location evidence="1">Cell membrane</location>
        <topology evidence="1">Peripheral membrane protein</topology>
        <orientation evidence="1">Cytoplasmic side</orientation>
    </subcellularLocation>
</comment>
<comment type="similarity">
    <text evidence="1">Belongs to the TRAFAC class translation factor GTPase superfamily. Classic translation factor GTPase family. LepA subfamily.</text>
</comment>
<accession>C4Z541</accession>
<keyword id="KW-1003">Cell membrane</keyword>
<keyword id="KW-0342">GTP-binding</keyword>
<keyword id="KW-0378">Hydrolase</keyword>
<keyword id="KW-0472">Membrane</keyword>
<keyword id="KW-0547">Nucleotide-binding</keyword>
<keyword id="KW-0648">Protein biosynthesis</keyword>
<keyword id="KW-1185">Reference proteome</keyword>
<proteinExistence type="inferred from homology"/>